<protein>
    <recommendedName>
        <fullName evidence="1">Methionyl-tRNA formyltransferase</fullName>
        <ecNumber evidence="1">2.1.2.9</ecNumber>
    </recommendedName>
</protein>
<reference key="1">
    <citation type="journal article" date="2004" name="Proc. Natl. Acad. Sci. U.S.A.">
        <title>Genomic plasticity of the causative agent of melioidosis, Burkholderia pseudomallei.</title>
        <authorList>
            <person name="Holden M.T.G."/>
            <person name="Titball R.W."/>
            <person name="Peacock S.J."/>
            <person name="Cerdeno-Tarraga A.-M."/>
            <person name="Atkins T."/>
            <person name="Crossman L.C."/>
            <person name="Pitt T."/>
            <person name="Churcher C."/>
            <person name="Mungall K.L."/>
            <person name="Bentley S.D."/>
            <person name="Sebaihia M."/>
            <person name="Thomson N.R."/>
            <person name="Bason N."/>
            <person name="Beacham I.R."/>
            <person name="Brooks K."/>
            <person name="Brown K.A."/>
            <person name="Brown N.F."/>
            <person name="Challis G.L."/>
            <person name="Cherevach I."/>
            <person name="Chillingworth T."/>
            <person name="Cronin A."/>
            <person name="Crossett B."/>
            <person name="Davis P."/>
            <person name="DeShazer D."/>
            <person name="Feltwell T."/>
            <person name="Fraser A."/>
            <person name="Hance Z."/>
            <person name="Hauser H."/>
            <person name="Holroyd S."/>
            <person name="Jagels K."/>
            <person name="Keith K.E."/>
            <person name="Maddison M."/>
            <person name="Moule S."/>
            <person name="Price C."/>
            <person name="Quail M.A."/>
            <person name="Rabbinowitsch E."/>
            <person name="Rutherford K."/>
            <person name="Sanders M."/>
            <person name="Simmonds M."/>
            <person name="Songsivilai S."/>
            <person name="Stevens K."/>
            <person name="Tumapa S."/>
            <person name="Vesaratchavest M."/>
            <person name="Whitehead S."/>
            <person name="Yeats C."/>
            <person name="Barrell B.G."/>
            <person name="Oyston P.C.F."/>
            <person name="Parkhill J."/>
        </authorList>
    </citation>
    <scope>NUCLEOTIDE SEQUENCE [LARGE SCALE GENOMIC DNA]</scope>
    <source>
        <strain>K96243</strain>
    </source>
</reference>
<gene>
    <name evidence="1" type="primary">fmt</name>
    <name type="ordered locus">BPSL0122</name>
</gene>
<keyword id="KW-0648">Protein biosynthesis</keyword>
<keyword id="KW-1185">Reference proteome</keyword>
<keyword id="KW-0808">Transferase</keyword>
<organism>
    <name type="scientific">Burkholderia pseudomallei (strain K96243)</name>
    <dbReference type="NCBI Taxonomy" id="272560"/>
    <lineage>
        <taxon>Bacteria</taxon>
        <taxon>Pseudomonadati</taxon>
        <taxon>Pseudomonadota</taxon>
        <taxon>Betaproteobacteria</taxon>
        <taxon>Burkholderiales</taxon>
        <taxon>Burkholderiaceae</taxon>
        <taxon>Burkholderia</taxon>
        <taxon>pseudomallei group</taxon>
    </lineage>
</organism>
<evidence type="ECO:0000255" key="1">
    <source>
        <dbReference type="HAMAP-Rule" id="MF_00182"/>
    </source>
</evidence>
<feature type="chain" id="PRO_0000082937" description="Methionyl-tRNA formyltransferase">
    <location>
        <begin position="1"/>
        <end position="327"/>
    </location>
</feature>
<feature type="binding site" evidence="1">
    <location>
        <begin position="121"/>
        <end position="124"/>
    </location>
    <ligand>
        <name>(6S)-5,6,7,8-tetrahydrofolate</name>
        <dbReference type="ChEBI" id="CHEBI:57453"/>
    </ligand>
</feature>
<proteinExistence type="inferred from homology"/>
<accession>Q63YR6</accession>
<name>FMT_BURPS</name>
<dbReference type="EC" id="2.1.2.9" evidence="1"/>
<dbReference type="EMBL" id="BX571965">
    <property type="protein sequence ID" value="CAH34108.1"/>
    <property type="molecule type" value="Genomic_DNA"/>
</dbReference>
<dbReference type="RefSeq" id="WP_004549892.1">
    <property type="nucleotide sequence ID" value="NZ_CP009538.1"/>
</dbReference>
<dbReference type="RefSeq" id="YP_106749.1">
    <property type="nucleotide sequence ID" value="NC_006350.1"/>
</dbReference>
<dbReference type="SMR" id="Q63YR6"/>
<dbReference type="STRING" id="272560.BPSL0122"/>
<dbReference type="KEGG" id="bps:BPSL0122"/>
<dbReference type="PATRIC" id="fig|272560.51.peg.1601"/>
<dbReference type="eggNOG" id="COG0223">
    <property type="taxonomic scope" value="Bacteria"/>
</dbReference>
<dbReference type="Proteomes" id="UP000000605">
    <property type="component" value="Chromosome 1"/>
</dbReference>
<dbReference type="GO" id="GO:0005829">
    <property type="term" value="C:cytosol"/>
    <property type="evidence" value="ECO:0007669"/>
    <property type="project" value="TreeGrafter"/>
</dbReference>
<dbReference type="GO" id="GO:0004479">
    <property type="term" value="F:methionyl-tRNA formyltransferase activity"/>
    <property type="evidence" value="ECO:0007669"/>
    <property type="project" value="UniProtKB-UniRule"/>
</dbReference>
<dbReference type="CDD" id="cd08646">
    <property type="entry name" value="FMT_core_Met-tRNA-FMT_N"/>
    <property type="match status" value="1"/>
</dbReference>
<dbReference type="CDD" id="cd08704">
    <property type="entry name" value="Met_tRNA_FMT_C"/>
    <property type="match status" value="1"/>
</dbReference>
<dbReference type="FunFam" id="3.40.50.12230:FF:000001">
    <property type="entry name" value="Methionyl-tRNA formyltransferase"/>
    <property type="match status" value="1"/>
</dbReference>
<dbReference type="Gene3D" id="3.10.25.10">
    <property type="entry name" value="Formyl transferase, C-terminal domain"/>
    <property type="match status" value="1"/>
</dbReference>
<dbReference type="Gene3D" id="3.40.50.170">
    <property type="entry name" value="Formyl transferase, N-terminal domain"/>
    <property type="match status" value="1"/>
</dbReference>
<dbReference type="HAMAP" id="MF_00182">
    <property type="entry name" value="Formyl_trans"/>
    <property type="match status" value="1"/>
</dbReference>
<dbReference type="InterPro" id="IPR005794">
    <property type="entry name" value="Fmt"/>
</dbReference>
<dbReference type="InterPro" id="IPR005793">
    <property type="entry name" value="Formyl_trans_C"/>
</dbReference>
<dbReference type="InterPro" id="IPR037022">
    <property type="entry name" value="Formyl_trans_C_sf"/>
</dbReference>
<dbReference type="InterPro" id="IPR002376">
    <property type="entry name" value="Formyl_transf_N"/>
</dbReference>
<dbReference type="InterPro" id="IPR036477">
    <property type="entry name" value="Formyl_transf_N_sf"/>
</dbReference>
<dbReference type="InterPro" id="IPR011034">
    <property type="entry name" value="Formyl_transferase-like_C_sf"/>
</dbReference>
<dbReference type="InterPro" id="IPR001555">
    <property type="entry name" value="GART_AS"/>
</dbReference>
<dbReference type="InterPro" id="IPR044135">
    <property type="entry name" value="Met-tRNA-FMT_C"/>
</dbReference>
<dbReference type="InterPro" id="IPR041711">
    <property type="entry name" value="Met-tRNA-FMT_N"/>
</dbReference>
<dbReference type="NCBIfam" id="TIGR00460">
    <property type="entry name" value="fmt"/>
    <property type="match status" value="1"/>
</dbReference>
<dbReference type="PANTHER" id="PTHR11138">
    <property type="entry name" value="METHIONYL-TRNA FORMYLTRANSFERASE"/>
    <property type="match status" value="1"/>
</dbReference>
<dbReference type="PANTHER" id="PTHR11138:SF5">
    <property type="entry name" value="METHIONYL-TRNA FORMYLTRANSFERASE, MITOCHONDRIAL"/>
    <property type="match status" value="1"/>
</dbReference>
<dbReference type="Pfam" id="PF02911">
    <property type="entry name" value="Formyl_trans_C"/>
    <property type="match status" value="1"/>
</dbReference>
<dbReference type="Pfam" id="PF00551">
    <property type="entry name" value="Formyl_trans_N"/>
    <property type="match status" value="1"/>
</dbReference>
<dbReference type="SUPFAM" id="SSF50486">
    <property type="entry name" value="FMT C-terminal domain-like"/>
    <property type="match status" value="1"/>
</dbReference>
<dbReference type="SUPFAM" id="SSF53328">
    <property type="entry name" value="Formyltransferase"/>
    <property type="match status" value="1"/>
</dbReference>
<dbReference type="PROSITE" id="PS00373">
    <property type="entry name" value="GART"/>
    <property type="match status" value="1"/>
</dbReference>
<comment type="function">
    <text evidence="1">Attaches a formyl group to the free amino group of methionyl-tRNA(fMet). The formyl group appears to play a dual role in the initiator identity of N-formylmethionyl-tRNA by promoting its recognition by IF2 and preventing the misappropriation of this tRNA by the elongation apparatus.</text>
</comment>
<comment type="catalytic activity">
    <reaction evidence="1">
        <text>L-methionyl-tRNA(fMet) + (6R)-10-formyltetrahydrofolate = N-formyl-L-methionyl-tRNA(fMet) + (6S)-5,6,7,8-tetrahydrofolate + H(+)</text>
        <dbReference type="Rhea" id="RHEA:24380"/>
        <dbReference type="Rhea" id="RHEA-COMP:9952"/>
        <dbReference type="Rhea" id="RHEA-COMP:9953"/>
        <dbReference type="ChEBI" id="CHEBI:15378"/>
        <dbReference type="ChEBI" id="CHEBI:57453"/>
        <dbReference type="ChEBI" id="CHEBI:78530"/>
        <dbReference type="ChEBI" id="CHEBI:78844"/>
        <dbReference type="ChEBI" id="CHEBI:195366"/>
        <dbReference type="EC" id="2.1.2.9"/>
    </reaction>
</comment>
<comment type="similarity">
    <text evidence="1">Belongs to the Fmt family.</text>
</comment>
<sequence length="327" mass="33914">MTHSLRVIFAGTPEFAAAALAAIHEAGFPVPLVLTQPDRPAGRGMKLQASAVKRYALERGMAVAQPPSLRRAGKYPAEAVAALDLLHATPHDVMVVAAYGLLLPQEVLELPRHGCINIHASLLPRWRGAAPIHRAIEAGDAETGVTLMQMDAGLDTGAMLHEARVAIAPDDTTATLHDKLAAAGARLIVDALVELERTGALAATPQPADGVTYAEKIGKHEAALDWRKPAAALARQVRAFDPFPGGAGTLDGATLKLWAADAVPGRDDAAPGTIVDIGPDGVVIACGEGALRVTQLQKPGGKRLPAREFLAGAPLAVGQRFAPADAA</sequence>